<gene>
    <name type="primary">ETFDH</name>
</gene>
<feature type="transit peptide" description="Mitochondrion" evidence="4">
    <location>
        <begin position="1"/>
        <end position="33"/>
    </location>
</feature>
<feature type="chain" id="PRO_0000008663" description="Electron transfer flavoprotein-ubiquinone oxidoreductase, mitochondrial">
    <location>
        <begin position="34"/>
        <end position="617"/>
    </location>
</feature>
<feature type="intramembrane region">
    <location>
        <begin position="109"/>
        <end position="130"/>
    </location>
</feature>
<feature type="intramembrane region">
    <location>
        <begin position="428"/>
        <end position="447"/>
    </location>
</feature>
<feature type="domain" description="4Fe-4S ferredoxin-type" evidence="5">
    <location>
        <begin position="577"/>
        <end position="606"/>
    </location>
</feature>
<feature type="binding site" evidence="6">
    <location>
        <begin position="75"/>
        <end position="80"/>
    </location>
    <ligand>
        <name>FAD</name>
        <dbReference type="ChEBI" id="CHEBI:57692"/>
    </ligand>
</feature>
<feature type="binding site" evidence="6">
    <location>
        <position position="305"/>
    </location>
    <ligand>
        <name>a ubiquinone</name>
        <dbReference type="ChEBI" id="CHEBI:16389"/>
    </ligand>
</feature>
<feature type="binding site" evidence="6">
    <location>
        <position position="306"/>
    </location>
    <ligand>
        <name>a ubiquinone</name>
        <dbReference type="ChEBI" id="CHEBI:16389"/>
    </ligand>
</feature>
<feature type="binding site">
    <location>
        <position position="561"/>
    </location>
    <ligand>
        <name>[4Fe-4S] cluster</name>
        <dbReference type="ChEBI" id="CHEBI:49883"/>
    </ligand>
</feature>
<feature type="binding site">
    <location>
        <position position="586"/>
    </location>
    <ligand>
        <name>[4Fe-4S] cluster</name>
        <dbReference type="ChEBI" id="CHEBI:49883"/>
    </ligand>
</feature>
<feature type="binding site">
    <location>
        <position position="589"/>
    </location>
    <ligand>
        <name>[4Fe-4S] cluster</name>
        <dbReference type="ChEBI" id="CHEBI:49883"/>
    </ligand>
</feature>
<feature type="binding site">
    <location>
        <position position="592"/>
    </location>
    <ligand>
        <name>[4Fe-4S] cluster</name>
        <dbReference type="ChEBI" id="CHEBI:49883"/>
    </ligand>
</feature>
<feature type="modified residue" description="N6-acetyllysine" evidence="3">
    <location>
        <position position="96"/>
    </location>
</feature>
<feature type="modified residue" description="N6-acetyllysine" evidence="3">
    <location>
        <position position="132"/>
    </location>
</feature>
<feature type="modified residue" description="N6-acetyllysine" evidence="3">
    <location>
        <position position="223"/>
    </location>
</feature>
<feature type="modified residue" description="N6-acetyllysine" evidence="3">
    <location>
        <position position="357"/>
    </location>
</feature>
<feature type="modified residue" description="Phosphoserine" evidence="2">
    <location>
        <position position="551"/>
    </location>
</feature>
<feature type="sequence conflict" description="In Ref. 2; EW134518." evidence="7" ref="2">
    <original>C</original>
    <variation>S</variation>
    <location>
        <position position="37"/>
    </location>
</feature>
<feature type="turn" evidence="8">
    <location>
        <begin position="46"/>
        <end position="48"/>
    </location>
</feature>
<feature type="helix" evidence="8">
    <location>
        <begin position="55"/>
        <end position="57"/>
    </location>
</feature>
<feature type="strand" evidence="8">
    <location>
        <begin position="66"/>
        <end position="68"/>
    </location>
</feature>
<feature type="strand" evidence="8">
    <location>
        <begin position="70"/>
        <end position="74"/>
    </location>
</feature>
<feature type="helix" evidence="8">
    <location>
        <begin position="78"/>
        <end position="93"/>
    </location>
</feature>
<feature type="strand" evidence="8">
    <location>
        <begin position="100"/>
        <end position="103"/>
    </location>
</feature>
<feature type="strand" evidence="8">
    <location>
        <begin position="105"/>
        <end position="108"/>
    </location>
</feature>
<feature type="turn" evidence="8">
    <location>
        <begin position="109"/>
        <end position="112"/>
    </location>
</feature>
<feature type="helix" evidence="8">
    <location>
        <begin position="122"/>
        <end position="127"/>
    </location>
</feature>
<feature type="helix" evidence="8">
    <location>
        <begin position="131"/>
        <end position="134"/>
    </location>
</feature>
<feature type="strand" evidence="8">
    <location>
        <begin position="144"/>
        <end position="150"/>
    </location>
</feature>
<feature type="strand" evidence="8">
    <location>
        <begin position="155"/>
        <end position="157"/>
    </location>
</feature>
<feature type="strand" evidence="9">
    <location>
        <begin position="162"/>
        <end position="164"/>
    </location>
</feature>
<feature type="helix" evidence="8">
    <location>
        <begin position="176"/>
        <end position="189"/>
    </location>
</feature>
<feature type="strand" evidence="8">
    <location>
        <begin position="193"/>
        <end position="195"/>
    </location>
</feature>
<feature type="strand" evidence="8">
    <location>
        <begin position="200"/>
        <end position="205"/>
    </location>
</feature>
<feature type="strand" evidence="8">
    <location>
        <begin position="209"/>
        <end position="216"/>
    </location>
</feature>
<feature type="strand" evidence="8">
    <location>
        <begin position="219"/>
        <end position="221"/>
    </location>
</feature>
<feature type="strand" evidence="8">
    <location>
        <begin position="227"/>
        <end position="232"/>
    </location>
</feature>
<feature type="strand" evidence="8">
    <location>
        <begin position="236"/>
        <end position="238"/>
    </location>
</feature>
<feature type="strand" evidence="8">
    <location>
        <begin position="240"/>
        <end position="244"/>
    </location>
</feature>
<feature type="helix" evidence="8">
    <location>
        <begin position="251"/>
        <end position="259"/>
    </location>
</feature>
<feature type="turn" evidence="8">
    <location>
        <begin position="260"/>
        <end position="265"/>
    </location>
</feature>
<feature type="strand" evidence="8">
    <location>
        <begin position="271"/>
        <end position="280"/>
    </location>
</feature>
<feature type="helix" evidence="8">
    <location>
        <begin position="283"/>
        <end position="285"/>
    </location>
</feature>
<feature type="strand" evidence="8">
    <location>
        <begin position="290"/>
        <end position="296"/>
    </location>
</feature>
<feature type="strand" evidence="8">
    <location>
        <begin position="305"/>
        <end position="311"/>
    </location>
</feature>
<feature type="strand" evidence="8">
    <location>
        <begin position="314"/>
        <end position="316"/>
    </location>
</feature>
<feature type="strand" evidence="8">
    <location>
        <begin position="318"/>
        <end position="326"/>
    </location>
</feature>
<feature type="helix" evidence="8">
    <location>
        <begin position="336"/>
        <end position="343"/>
    </location>
</feature>
<feature type="turn" evidence="8">
    <location>
        <begin position="347"/>
        <end position="349"/>
    </location>
</feature>
<feature type="helix" evidence="8">
    <location>
        <begin position="350"/>
        <end position="353"/>
    </location>
</feature>
<feature type="strand" evidence="8">
    <location>
        <begin position="357"/>
        <end position="367"/>
    </location>
</feature>
<feature type="helix" evidence="8">
    <location>
        <begin position="370"/>
        <end position="373"/>
    </location>
</feature>
<feature type="strand" evidence="8">
    <location>
        <begin position="382"/>
        <end position="384"/>
    </location>
</feature>
<feature type="turn" evidence="8">
    <location>
        <begin position="386"/>
        <end position="389"/>
    </location>
</feature>
<feature type="turn" evidence="8">
    <location>
        <begin position="394"/>
        <end position="397"/>
    </location>
</feature>
<feature type="helix" evidence="8">
    <location>
        <begin position="400"/>
        <end position="418"/>
    </location>
</feature>
<feature type="strand" evidence="8">
    <location>
        <begin position="426"/>
        <end position="429"/>
    </location>
</feature>
<feature type="helix" evidence="8">
    <location>
        <begin position="434"/>
        <end position="440"/>
    </location>
</feature>
<feature type="helix" evidence="8">
    <location>
        <begin position="443"/>
        <end position="450"/>
    </location>
</feature>
<feature type="turn" evidence="8">
    <location>
        <begin position="451"/>
        <end position="455"/>
    </location>
</feature>
<feature type="helix" evidence="8">
    <location>
        <begin position="456"/>
        <end position="459"/>
    </location>
</feature>
<feature type="turn" evidence="8">
    <location>
        <begin position="461"/>
        <end position="463"/>
    </location>
</feature>
<feature type="helix" evidence="8">
    <location>
        <begin position="464"/>
        <end position="474"/>
    </location>
</feature>
<feature type="turn" evidence="8">
    <location>
        <begin position="475"/>
        <end position="480"/>
    </location>
</feature>
<feature type="helix" evidence="8">
    <location>
        <begin position="492"/>
        <end position="494"/>
    </location>
</feature>
<feature type="helix" evidence="8">
    <location>
        <begin position="499"/>
        <end position="501"/>
    </location>
</feature>
<feature type="strand" evidence="8">
    <location>
        <begin position="512"/>
        <end position="515"/>
    </location>
</feature>
<feature type="helix" evidence="8">
    <location>
        <begin position="518"/>
        <end position="523"/>
    </location>
</feature>
<feature type="turn" evidence="8">
    <location>
        <begin position="524"/>
        <end position="526"/>
    </location>
</feature>
<feature type="strand" evidence="8">
    <location>
        <begin position="531"/>
        <end position="533"/>
    </location>
</feature>
<feature type="strand" evidence="8">
    <location>
        <begin position="536"/>
        <end position="541"/>
    </location>
</feature>
<feature type="helix" evidence="8">
    <location>
        <begin position="544"/>
        <end position="547"/>
    </location>
</feature>
<feature type="helix" evidence="8">
    <location>
        <begin position="549"/>
        <end position="553"/>
    </location>
</feature>
<feature type="helix" evidence="8">
    <location>
        <begin position="557"/>
        <end position="560"/>
    </location>
</feature>
<feature type="strand" evidence="8">
    <location>
        <begin position="566"/>
        <end position="570"/>
    </location>
</feature>
<feature type="strand" evidence="8">
    <location>
        <begin position="572"/>
        <end position="575"/>
    </location>
</feature>
<feature type="strand" evidence="8">
    <location>
        <begin position="577"/>
        <end position="581"/>
    </location>
</feature>
<feature type="helix" evidence="8">
    <location>
        <begin position="583"/>
        <end position="585"/>
    </location>
</feature>
<feature type="helix" evidence="8">
    <location>
        <begin position="591"/>
        <end position="595"/>
    </location>
</feature>
<feature type="strand" evidence="8">
    <location>
        <begin position="601"/>
        <end position="603"/>
    </location>
</feature>
<proteinExistence type="evidence at protein level"/>
<keyword id="KW-0002">3D-structure</keyword>
<keyword id="KW-0004">4Fe-4S</keyword>
<keyword id="KW-0007">Acetylation</keyword>
<keyword id="KW-0903">Direct protein sequencing</keyword>
<keyword id="KW-0249">Electron transport</keyword>
<keyword id="KW-0274">FAD</keyword>
<keyword id="KW-0285">Flavoprotein</keyword>
<keyword id="KW-0408">Iron</keyword>
<keyword id="KW-0411">Iron-sulfur</keyword>
<keyword id="KW-0472">Membrane</keyword>
<keyword id="KW-0479">Metal-binding</keyword>
<keyword id="KW-0496">Mitochondrion</keyword>
<keyword id="KW-0999">Mitochondrion inner membrane</keyword>
<keyword id="KW-0560">Oxidoreductase</keyword>
<keyword id="KW-0597">Phosphoprotein</keyword>
<keyword id="KW-1185">Reference proteome</keyword>
<keyword id="KW-0809">Transit peptide</keyword>
<keyword id="KW-0813">Transport</keyword>
<keyword id="KW-0830">Ubiquinone</keyword>
<organism>
    <name type="scientific">Sus scrofa</name>
    <name type="common">Pig</name>
    <dbReference type="NCBI Taxonomy" id="9823"/>
    <lineage>
        <taxon>Eukaryota</taxon>
        <taxon>Metazoa</taxon>
        <taxon>Chordata</taxon>
        <taxon>Craniata</taxon>
        <taxon>Vertebrata</taxon>
        <taxon>Euteleostomi</taxon>
        <taxon>Mammalia</taxon>
        <taxon>Eutheria</taxon>
        <taxon>Laurasiatheria</taxon>
        <taxon>Artiodactyla</taxon>
        <taxon>Suina</taxon>
        <taxon>Suidae</taxon>
        <taxon>Sus</taxon>
    </lineage>
</organism>
<evidence type="ECO:0000250" key="1"/>
<evidence type="ECO:0000250" key="2">
    <source>
        <dbReference type="UniProtKB" id="Q16134"/>
    </source>
</evidence>
<evidence type="ECO:0000250" key="3">
    <source>
        <dbReference type="UniProtKB" id="Q921G7"/>
    </source>
</evidence>
<evidence type="ECO:0000255" key="4"/>
<evidence type="ECO:0000255" key="5">
    <source>
        <dbReference type="PROSITE-ProRule" id="PRU00711"/>
    </source>
</evidence>
<evidence type="ECO:0000269" key="6">
    <source>
    </source>
</evidence>
<evidence type="ECO:0000305" key="7"/>
<evidence type="ECO:0007829" key="8">
    <source>
        <dbReference type="PDB" id="2GMH"/>
    </source>
</evidence>
<evidence type="ECO:0007829" key="9">
    <source>
        <dbReference type="PDB" id="2GMJ"/>
    </source>
</evidence>
<protein>
    <recommendedName>
        <fullName>Electron transfer flavoprotein-ubiquinone oxidoreductase, mitochondrial</fullName>
        <shortName>ETF-QO</shortName>
        <shortName>ETF-ubiquinone oxidoreductase</shortName>
        <ecNumber>1.5.5.1</ecNumber>
    </recommendedName>
    <alternativeName>
        <fullName>Electron-transferring-flavoprotein dehydrogenase</fullName>
        <shortName>ETF dehydrogenase</shortName>
    </alternativeName>
</protein>
<sequence length="617" mass="68632">MMVPLAKLASPAYQCFHALKIKKNYLPLCATRWSSTCKVPRITTHYTIYPRDQDKRWEGVNMERFAEEADVVIVGAGPAGLSAATRLKQLAAQHEKDLRVCLVEKAAHIGAHTLSGACLDPRAFEELFPDWKEKGAPLNTPVTEDRFGILTEKYRIPVPILPGLPMNNHGNYVVRLGHLVSWMGEQAEALGVEVYPGYAAAEILFHEDGSVKGIATNDVGIQKDGAPKTTFERGLELHAKVTIFAEGCHGHLAKQLYKKFDLRANCEPQTYGIGLKELWVIDEKKWKPGRVDHTVGWPLDRHTYGGSFLYHLNEGEPLLALGFVVGLDYQNPYLSPFREFQRWKHHPSIKPTLEGGKRIAYGARALNEGGFQSIPKLTFPGGLLIGCSPGFMNVPKIKGTHTAMKSGTLAAESIFNQLTSENLQSKTIGLHVTEYEDNLKNSWVWKELYSVRNIRPSCHGILGVYGGMIYTGIFYWIFRGMEPWTLKHKGSDSDQLKPAKDCTPIEYPKPDGQISFDLLSSVALSGTNHEHDQPAHLTLKDDSVPVNRNLSIYDGPEQRFCPAGVYEFVPLEQGDGFRLQINAQNCVHCKTCDIKDPSQNINWVVPEGGGGPAYNGM</sequence>
<reference key="1">
    <citation type="journal article" date="1994" name="Eur. J. Biochem.">
        <title>Molecular cloning and expression of a cDNA encoding human electron transfer flavoprotein-ubiquinone oxidoreductase.</title>
        <authorList>
            <person name="Goodman S.I."/>
            <person name="Axtell K.M."/>
            <person name="Bindoff L.A."/>
            <person name="Beard S.E."/>
            <person name="Gill R.E."/>
            <person name="Frerman F.E."/>
        </authorList>
    </citation>
    <scope>NUCLEOTIDE SEQUENCE [MRNA] OF 11-617</scope>
    <scope>PARTIAL PROTEIN SEQUENCE</scope>
    <source>
        <tissue>Fetal liver</tissue>
    </source>
</reference>
<reference key="2">
    <citation type="journal article" date="2007" name="Genome Biol.">
        <title>Porcine transcriptome analysis based on 97 non-normalized cDNA libraries and assembly of 1,021,891 expressed sequence tags.</title>
        <authorList>
            <person name="Gorodkin J."/>
            <person name="Cirera S."/>
            <person name="Hedegaard J."/>
            <person name="Gilchrist M.J."/>
            <person name="Panitz F."/>
            <person name="Jorgensen C.B."/>
            <person name="Scheibye-Knudsen K."/>
            <person name="Arvin T."/>
            <person name="Lumholdt S."/>
            <person name="Sawera M."/>
            <person name="Green T."/>
            <person name="Nielsen B.J."/>
            <person name="Havgaard J.H."/>
            <person name="Rosenkilde C."/>
            <person name="Wang J."/>
            <person name="Li H."/>
            <person name="Li R."/>
            <person name="Liu B."/>
            <person name="Hu S."/>
            <person name="Dong W."/>
            <person name="Li W."/>
            <person name="Yu J."/>
            <person name="Wang J."/>
            <person name="Staerfeldt H.H."/>
            <person name="Wernersson R."/>
            <person name="Madsen L.B."/>
            <person name="Thomsen B."/>
            <person name="Hornshoj H."/>
            <person name="Bujie Z."/>
            <person name="Wang X."/>
            <person name="Wang X."/>
            <person name="Bolund L."/>
            <person name="Brunak S."/>
            <person name="Yang H."/>
            <person name="Bendixen C."/>
            <person name="Fredholm M."/>
        </authorList>
    </citation>
    <scope>NUCLEOTIDE SEQUENCE [MRNA] OF 1-103</scope>
</reference>
<reference key="3">
    <citation type="journal article" date="2006" name="Proc. Natl. Acad. Sci. U.S.A.">
        <title>Structure of electron transfer flavoprotein-ubiquinone oxidoreductase and electron transfer to the mitochondrial ubiquinone pool.</title>
        <authorList>
            <person name="Zhang J."/>
            <person name="Frerman F.E."/>
            <person name="Kim J.J."/>
        </authorList>
    </citation>
    <scope>X-RAY CRYSTALLOGRAPHY (2.5 ANGSTROMS) OF 24-607 IN COMPLEX WITH FAD AND UBIQUINONE</scope>
    <scope>SUBUNIT</scope>
    <scope>IRON-SULFUR BINDING SITES</scope>
</reference>
<comment type="function">
    <text>Accepts electrons from ETF and reduces ubiquinone.</text>
</comment>
<comment type="catalytic activity">
    <reaction>
        <text>a ubiquinone + reduced [electron-transfer flavoprotein] = a ubiquinol + oxidized [electron-transfer flavoprotein] + H(+)</text>
        <dbReference type="Rhea" id="RHEA:24052"/>
        <dbReference type="Rhea" id="RHEA-COMP:9565"/>
        <dbReference type="Rhea" id="RHEA-COMP:9566"/>
        <dbReference type="Rhea" id="RHEA-COMP:10685"/>
        <dbReference type="Rhea" id="RHEA-COMP:10686"/>
        <dbReference type="ChEBI" id="CHEBI:15378"/>
        <dbReference type="ChEBI" id="CHEBI:16389"/>
        <dbReference type="ChEBI" id="CHEBI:17976"/>
        <dbReference type="ChEBI" id="CHEBI:57692"/>
        <dbReference type="ChEBI" id="CHEBI:58307"/>
        <dbReference type="EC" id="1.5.5.1"/>
    </reaction>
</comment>
<comment type="cofactor">
    <cofactor>
        <name>[4Fe-4S] cluster</name>
        <dbReference type="ChEBI" id="CHEBI:49883"/>
    </cofactor>
    <text>Binds 1 [4Fe-4S] cluster.</text>
</comment>
<comment type="cofactor">
    <cofactor>
        <name>FAD</name>
        <dbReference type="ChEBI" id="CHEBI:57692"/>
    </cofactor>
</comment>
<comment type="subunit">
    <text evidence="6">Monomer.</text>
</comment>
<comment type="subcellular location">
    <subcellularLocation>
        <location evidence="1">Mitochondrion inner membrane</location>
    </subcellularLocation>
</comment>
<accession>P55931</accession>
<name>ETFD_PIG</name>
<dbReference type="EC" id="1.5.5.1"/>
<dbReference type="EMBL" id="EW134518">
    <property type="status" value="NOT_ANNOTATED_CDS"/>
    <property type="molecule type" value="mRNA"/>
</dbReference>
<dbReference type="PDB" id="2GMH">
    <property type="method" value="X-ray"/>
    <property type="resolution" value="2.50 A"/>
    <property type="chains" value="A/B=34-617"/>
</dbReference>
<dbReference type="PDB" id="2GMJ">
    <property type="method" value="X-ray"/>
    <property type="resolution" value="2.60 A"/>
    <property type="chains" value="A/B=34-617"/>
</dbReference>
<dbReference type="PDBsum" id="2GMH"/>
<dbReference type="PDBsum" id="2GMJ"/>
<dbReference type="SMR" id="P55931"/>
<dbReference type="FunCoup" id="P55931">
    <property type="interactions" value="1837"/>
</dbReference>
<dbReference type="STRING" id="9823.ENSSSCP00000058340"/>
<dbReference type="PaxDb" id="9823-ENSSSCP00000009469"/>
<dbReference type="PeptideAtlas" id="P55931"/>
<dbReference type="eggNOG" id="KOG2415">
    <property type="taxonomic scope" value="Eukaryota"/>
</dbReference>
<dbReference type="InParanoid" id="P55931"/>
<dbReference type="EvolutionaryTrace" id="P55931"/>
<dbReference type="Proteomes" id="UP000008227">
    <property type="component" value="Unplaced"/>
</dbReference>
<dbReference type="Proteomes" id="UP000314985">
    <property type="component" value="Unplaced"/>
</dbReference>
<dbReference type="Proteomes" id="UP000694570">
    <property type="component" value="Unplaced"/>
</dbReference>
<dbReference type="Proteomes" id="UP000694571">
    <property type="component" value="Unplaced"/>
</dbReference>
<dbReference type="Proteomes" id="UP000694720">
    <property type="component" value="Unplaced"/>
</dbReference>
<dbReference type="Proteomes" id="UP000694722">
    <property type="component" value="Unplaced"/>
</dbReference>
<dbReference type="Proteomes" id="UP000694723">
    <property type="component" value="Unplaced"/>
</dbReference>
<dbReference type="Proteomes" id="UP000694724">
    <property type="component" value="Unplaced"/>
</dbReference>
<dbReference type="Proteomes" id="UP000694725">
    <property type="component" value="Unplaced"/>
</dbReference>
<dbReference type="Proteomes" id="UP000694726">
    <property type="component" value="Unplaced"/>
</dbReference>
<dbReference type="Proteomes" id="UP000694727">
    <property type="component" value="Unplaced"/>
</dbReference>
<dbReference type="Proteomes" id="UP000694728">
    <property type="component" value="Unplaced"/>
</dbReference>
<dbReference type="GO" id="GO:0016020">
    <property type="term" value="C:membrane"/>
    <property type="evidence" value="ECO:0000314"/>
    <property type="project" value="UniProtKB"/>
</dbReference>
<dbReference type="GO" id="GO:0005743">
    <property type="term" value="C:mitochondrial inner membrane"/>
    <property type="evidence" value="ECO:0000318"/>
    <property type="project" value="GO_Central"/>
</dbReference>
<dbReference type="GO" id="GO:0005739">
    <property type="term" value="C:mitochondrion"/>
    <property type="evidence" value="ECO:0000314"/>
    <property type="project" value="UniProtKB"/>
</dbReference>
<dbReference type="GO" id="GO:0051539">
    <property type="term" value="F:4 iron, 4 sulfur cluster binding"/>
    <property type="evidence" value="ECO:0000314"/>
    <property type="project" value="UniProtKB"/>
</dbReference>
<dbReference type="GO" id="GO:0009055">
    <property type="term" value="F:electron transfer activity"/>
    <property type="evidence" value="ECO:0000314"/>
    <property type="project" value="UniProtKB"/>
</dbReference>
<dbReference type="GO" id="GO:0004174">
    <property type="term" value="F:electron-transferring-flavoprotein dehydrogenase activity"/>
    <property type="evidence" value="ECO:0000314"/>
    <property type="project" value="UniProtKB"/>
</dbReference>
<dbReference type="GO" id="GO:0050660">
    <property type="term" value="F:flavin adenine dinucleotide binding"/>
    <property type="evidence" value="ECO:0000314"/>
    <property type="project" value="UniProtKB"/>
</dbReference>
<dbReference type="GO" id="GO:0051536">
    <property type="term" value="F:iron-sulfur cluster binding"/>
    <property type="evidence" value="ECO:0000314"/>
    <property type="project" value="UniProtKB"/>
</dbReference>
<dbReference type="GO" id="GO:0046872">
    <property type="term" value="F:metal ion binding"/>
    <property type="evidence" value="ECO:0007669"/>
    <property type="project" value="UniProtKB-KW"/>
</dbReference>
<dbReference type="GO" id="GO:0016491">
    <property type="term" value="F:oxidoreductase activity"/>
    <property type="evidence" value="ECO:0000314"/>
    <property type="project" value="UniProtKB"/>
</dbReference>
<dbReference type="GO" id="GO:0048039">
    <property type="term" value="F:ubiquinone binding"/>
    <property type="evidence" value="ECO:0000314"/>
    <property type="project" value="UniProtKB"/>
</dbReference>
<dbReference type="GO" id="GO:0022900">
    <property type="term" value="P:electron transport chain"/>
    <property type="evidence" value="ECO:0000314"/>
    <property type="project" value="UniProtKB"/>
</dbReference>
<dbReference type="GO" id="GO:0006979">
    <property type="term" value="P:response to oxidative stress"/>
    <property type="evidence" value="ECO:0000250"/>
    <property type="project" value="UniProtKB"/>
</dbReference>
<dbReference type="FunFam" id="3.30.70.20:FF:000088">
    <property type="entry name" value="Electron transfer flavoprotein-ubiquinone oxidoreductase, mitochondrial"/>
    <property type="match status" value="1"/>
</dbReference>
<dbReference type="Gene3D" id="3.30.70.20">
    <property type="match status" value="1"/>
</dbReference>
<dbReference type="Gene3D" id="3.30.9.90">
    <property type="match status" value="1"/>
</dbReference>
<dbReference type="Gene3D" id="3.50.50.60">
    <property type="entry name" value="FAD/NAD(P)-binding domain"/>
    <property type="match status" value="1"/>
</dbReference>
<dbReference type="InterPro" id="IPR017896">
    <property type="entry name" value="4Fe4S_Fe-S-bd"/>
</dbReference>
<dbReference type="InterPro" id="IPR040156">
    <property type="entry name" value="ETF-QO"/>
</dbReference>
<dbReference type="InterPro" id="IPR049398">
    <property type="entry name" value="ETF-QO/FixC_UQ-bd"/>
</dbReference>
<dbReference type="InterPro" id="IPR007859">
    <property type="entry name" value="ETF-QO/FixX_C"/>
</dbReference>
<dbReference type="InterPro" id="IPR036188">
    <property type="entry name" value="FAD/NAD-bd_sf"/>
</dbReference>
<dbReference type="PANTHER" id="PTHR10617">
    <property type="entry name" value="ELECTRON TRANSFER FLAVOPROTEIN-UBIQUINONE OXIDOREDUCTASE"/>
    <property type="match status" value="1"/>
</dbReference>
<dbReference type="PANTHER" id="PTHR10617:SF107">
    <property type="entry name" value="ELECTRON TRANSFER FLAVOPROTEIN-UBIQUINONE OXIDOREDUCTASE, MITOCHONDRIAL"/>
    <property type="match status" value="1"/>
</dbReference>
<dbReference type="Pfam" id="PF21162">
    <property type="entry name" value="ETFQO_UQ-bd"/>
    <property type="match status" value="1"/>
</dbReference>
<dbReference type="Pfam" id="PF05187">
    <property type="entry name" value="Fer4_ETF_QO"/>
    <property type="match status" value="1"/>
</dbReference>
<dbReference type="Pfam" id="PF13450">
    <property type="entry name" value="NAD_binding_8"/>
    <property type="match status" value="1"/>
</dbReference>
<dbReference type="SUPFAM" id="SSF54862">
    <property type="entry name" value="4Fe-4S ferredoxins"/>
    <property type="match status" value="1"/>
</dbReference>
<dbReference type="SUPFAM" id="SSF54373">
    <property type="entry name" value="FAD-linked reductases, C-terminal domain"/>
    <property type="match status" value="1"/>
</dbReference>
<dbReference type="SUPFAM" id="SSF51905">
    <property type="entry name" value="FAD/NAD(P)-binding domain"/>
    <property type="match status" value="1"/>
</dbReference>
<dbReference type="PROSITE" id="PS51379">
    <property type="entry name" value="4FE4S_FER_2"/>
    <property type="match status" value="1"/>
</dbReference>